<dbReference type="EC" id="6.3.5.-" evidence="1"/>
<dbReference type="EMBL" id="CP000930">
    <property type="protein sequence ID" value="ABZ85533.1"/>
    <property type="molecule type" value="Genomic_DNA"/>
</dbReference>
<dbReference type="RefSeq" id="WP_012284008.1">
    <property type="nucleotide sequence ID" value="NC_010337.2"/>
</dbReference>
<dbReference type="SMR" id="B0TDK8"/>
<dbReference type="STRING" id="498761.HM1_3026"/>
<dbReference type="KEGG" id="hmo:HM1_3026"/>
<dbReference type="eggNOG" id="COG0721">
    <property type="taxonomic scope" value="Bacteria"/>
</dbReference>
<dbReference type="HOGENOM" id="CLU_105899_1_2_9"/>
<dbReference type="OrthoDB" id="9813938at2"/>
<dbReference type="Proteomes" id="UP000008550">
    <property type="component" value="Chromosome"/>
</dbReference>
<dbReference type="GO" id="GO:0050566">
    <property type="term" value="F:asparaginyl-tRNA synthase (glutamine-hydrolyzing) activity"/>
    <property type="evidence" value="ECO:0007669"/>
    <property type="project" value="RHEA"/>
</dbReference>
<dbReference type="GO" id="GO:0005524">
    <property type="term" value="F:ATP binding"/>
    <property type="evidence" value="ECO:0007669"/>
    <property type="project" value="UniProtKB-KW"/>
</dbReference>
<dbReference type="GO" id="GO:0050567">
    <property type="term" value="F:glutaminyl-tRNA synthase (glutamine-hydrolyzing) activity"/>
    <property type="evidence" value="ECO:0007669"/>
    <property type="project" value="UniProtKB-UniRule"/>
</dbReference>
<dbReference type="GO" id="GO:0070681">
    <property type="term" value="P:glutaminyl-tRNAGln biosynthesis via transamidation"/>
    <property type="evidence" value="ECO:0007669"/>
    <property type="project" value="TreeGrafter"/>
</dbReference>
<dbReference type="GO" id="GO:0006450">
    <property type="term" value="P:regulation of translational fidelity"/>
    <property type="evidence" value="ECO:0007669"/>
    <property type="project" value="InterPro"/>
</dbReference>
<dbReference type="GO" id="GO:0006412">
    <property type="term" value="P:translation"/>
    <property type="evidence" value="ECO:0007669"/>
    <property type="project" value="UniProtKB-UniRule"/>
</dbReference>
<dbReference type="Gene3D" id="1.10.20.60">
    <property type="entry name" value="Glu-tRNAGln amidotransferase C subunit, N-terminal domain"/>
    <property type="match status" value="1"/>
</dbReference>
<dbReference type="HAMAP" id="MF_00122">
    <property type="entry name" value="GatC"/>
    <property type="match status" value="1"/>
</dbReference>
<dbReference type="InterPro" id="IPR036113">
    <property type="entry name" value="Asp/Glu-ADT_sf_sub_c"/>
</dbReference>
<dbReference type="InterPro" id="IPR003837">
    <property type="entry name" value="GatC"/>
</dbReference>
<dbReference type="NCBIfam" id="TIGR00135">
    <property type="entry name" value="gatC"/>
    <property type="match status" value="1"/>
</dbReference>
<dbReference type="PANTHER" id="PTHR15004">
    <property type="entry name" value="GLUTAMYL-TRNA(GLN) AMIDOTRANSFERASE SUBUNIT C, MITOCHONDRIAL"/>
    <property type="match status" value="1"/>
</dbReference>
<dbReference type="PANTHER" id="PTHR15004:SF0">
    <property type="entry name" value="GLUTAMYL-TRNA(GLN) AMIDOTRANSFERASE SUBUNIT C, MITOCHONDRIAL"/>
    <property type="match status" value="1"/>
</dbReference>
<dbReference type="Pfam" id="PF02686">
    <property type="entry name" value="GatC"/>
    <property type="match status" value="1"/>
</dbReference>
<dbReference type="SUPFAM" id="SSF141000">
    <property type="entry name" value="Glu-tRNAGln amidotransferase C subunit"/>
    <property type="match status" value="1"/>
</dbReference>
<accession>B0TDK8</accession>
<reference key="1">
    <citation type="journal article" date="2008" name="J. Bacteriol.">
        <title>The genome of Heliobacterium modesticaldum, a phototrophic representative of the Firmicutes containing the simplest photosynthetic apparatus.</title>
        <authorList>
            <person name="Sattley W.M."/>
            <person name="Madigan M.T."/>
            <person name="Swingley W.D."/>
            <person name="Cheung P.C."/>
            <person name="Clocksin K.M."/>
            <person name="Conrad A.L."/>
            <person name="Dejesa L.C."/>
            <person name="Honchak B.M."/>
            <person name="Jung D.O."/>
            <person name="Karbach L.E."/>
            <person name="Kurdoglu A."/>
            <person name="Lahiri S."/>
            <person name="Mastrian S.D."/>
            <person name="Page L.E."/>
            <person name="Taylor H.L."/>
            <person name="Wang Z.T."/>
            <person name="Raymond J."/>
            <person name="Chen M."/>
            <person name="Blankenship R.E."/>
            <person name="Touchman J.W."/>
        </authorList>
    </citation>
    <scope>NUCLEOTIDE SEQUENCE [LARGE SCALE GENOMIC DNA]</scope>
    <source>
        <strain>ATCC 51547 / Ice1</strain>
    </source>
</reference>
<proteinExistence type="inferred from homology"/>
<gene>
    <name evidence="1" type="primary">gatC</name>
    <name type="ordered locus">Helmi_29080</name>
    <name type="ORF">HM1_3026</name>
</gene>
<protein>
    <recommendedName>
        <fullName evidence="1">Aspartyl/glutamyl-tRNA(Asn/Gln) amidotransferase subunit C</fullName>
        <shortName evidence="1">Asp/Glu-ADT subunit C</shortName>
        <ecNumber evidence="1">6.3.5.-</ecNumber>
    </recommendedName>
</protein>
<evidence type="ECO:0000255" key="1">
    <source>
        <dbReference type="HAMAP-Rule" id="MF_00122"/>
    </source>
</evidence>
<feature type="chain" id="PRO_1000095287" description="Aspartyl/glutamyl-tRNA(Asn/Gln) amidotransferase subunit C">
    <location>
        <begin position="1"/>
        <end position="94"/>
    </location>
</feature>
<organism>
    <name type="scientific">Heliobacterium modesticaldum (strain ATCC 51547 / Ice1)</name>
    <dbReference type="NCBI Taxonomy" id="498761"/>
    <lineage>
        <taxon>Bacteria</taxon>
        <taxon>Bacillati</taxon>
        <taxon>Bacillota</taxon>
        <taxon>Clostridia</taxon>
        <taxon>Eubacteriales</taxon>
        <taxon>Heliobacteriaceae</taxon>
        <taxon>Heliomicrobium</taxon>
    </lineage>
</organism>
<name>GATC_HELMI</name>
<sequence length="94" mass="10813">MALTKAEVEYVAMLARLELSEADLERYTTQLNAILDYAQRLQGLDTKDVPPTAHVFPLHNVMRDDRIDPSMERERIVANAPEEEDGFFRVPRIV</sequence>
<keyword id="KW-0067">ATP-binding</keyword>
<keyword id="KW-0436">Ligase</keyword>
<keyword id="KW-0547">Nucleotide-binding</keyword>
<keyword id="KW-0648">Protein biosynthesis</keyword>
<keyword id="KW-1185">Reference proteome</keyword>
<comment type="function">
    <text evidence="1">Allows the formation of correctly charged Asn-tRNA(Asn) or Gln-tRNA(Gln) through the transamidation of misacylated Asp-tRNA(Asn) or Glu-tRNA(Gln) in organisms which lack either or both of asparaginyl-tRNA or glutaminyl-tRNA synthetases. The reaction takes place in the presence of glutamine and ATP through an activated phospho-Asp-tRNA(Asn) or phospho-Glu-tRNA(Gln).</text>
</comment>
<comment type="catalytic activity">
    <reaction evidence="1">
        <text>L-glutamyl-tRNA(Gln) + L-glutamine + ATP + H2O = L-glutaminyl-tRNA(Gln) + L-glutamate + ADP + phosphate + H(+)</text>
        <dbReference type="Rhea" id="RHEA:17521"/>
        <dbReference type="Rhea" id="RHEA-COMP:9681"/>
        <dbReference type="Rhea" id="RHEA-COMP:9684"/>
        <dbReference type="ChEBI" id="CHEBI:15377"/>
        <dbReference type="ChEBI" id="CHEBI:15378"/>
        <dbReference type="ChEBI" id="CHEBI:29985"/>
        <dbReference type="ChEBI" id="CHEBI:30616"/>
        <dbReference type="ChEBI" id="CHEBI:43474"/>
        <dbReference type="ChEBI" id="CHEBI:58359"/>
        <dbReference type="ChEBI" id="CHEBI:78520"/>
        <dbReference type="ChEBI" id="CHEBI:78521"/>
        <dbReference type="ChEBI" id="CHEBI:456216"/>
    </reaction>
</comment>
<comment type="catalytic activity">
    <reaction evidence="1">
        <text>L-aspartyl-tRNA(Asn) + L-glutamine + ATP + H2O = L-asparaginyl-tRNA(Asn) + L-glutamate + ADP + phosphate + 2 H(+)</text>
        <dbReference type="Rhea" id="RHEA:14513"/>
        <dbReference type="Rhea" id="RHEA-COMP:9674"/>
        <dbReference type="Rhea" id="RHEA-COMP:9677"/>
        <dbReference type="ChEBI" id="CHEBI:15377"/>
        <dbReference type="ChEBI" id="CHEBI:15378"/>
        <dbReference type="ChEBI" id="CHEBI:29985"/>
        <dbReference type="ChEBI" id="CHEBI:30616"/>
        <dbReference type="ChEBI" id="CHEBI:43474"/>
        <dbReference type="ChEBI" id="CHEBI:58359"/>
        <dbReference type="ChEBI" id="CHEBI:78515"/>
        <dbReference type="ChEBI" id="CHEBI:78516"/>
        <dbReference type="ChEBI" id="CHEBI:456216"/>
    </reaction>
</comment>
<comment type="subunit">
    <text evidence="1">Heterotrimer of A, B and C subunits.</text>
</comment>
<comment type="similarity">
    <text evidence="1">Belongs to the GatC family.</text>
</comment>